<sequence>MQLEIINPESTLINDVVAHRIAFSIGSNFNIYWYGIIFVCGFLLAILTYSLRLKFHYKVPYDPGFYYIFLAIPMTIIGARLWSLAIGDAKDFFDFRNGGLAIQGGVIAGVLSAAIYFPLILRMPKYHVRDLDADGNVIIRQPSMWIYADAIIPTILIGQALGRWGNFINGEIFGAESTVNDLQWLKKAMPAVFEGMKHYFIEGDKTLFTIYQPLFLYESFFNVIVFVFIYFGLSYIKQLKIGFVSMSYFFFYGVIRFSTESARAPQFSFAGTYVINSLLLIFGVLGALYVQFIAPILRKRFLLDAIIELFYKKKQQAHKFGQLRNPEEFLYYCHK</sequence>
<feature type="chain" id="PRO_1000137469" description="Phosphatidylglycerol--prolipoprotein diacylglyceryl transferase">
    <location>
        <begin position="1"/>
        <end position="335"/>
    </location>
</feature>
<feature type="transmembrane region" description="Helical" evidence="1">
    <location>
        <begin position="31"/>
        <end position="51"/>
    </location>
</feature>
<feature type="transmembrane region" description="Helical" evidence="1">
    <location>
        <begin position="67"/>
        <end position="87"/>
    </location>
</feature>
<feature type="transmembrane region" description="Helical" evidence="1">
    <location>
        <begin position="100"/>
        <end position="120"/>
    </location>
</feature>
<feature type="transmembrane region" description="Helical" evidence="1">
    <location>
        <begin position="213"/>
        <end position="233"/>
    </location>
</feature>
<feature type="transmembrane region" description="Helical" evidence="1">
    <location>
        <begin position="235"/>
        <end position="255"/>
    </location>
</feature>
<feature type="transmembrane region" description="Helical" evidence="1">
    <location>
        <begin position="277"/>
        <end position="297"/>
    </location>
</feature>
<feature type="binding site" evidence="1">
    <location>
        <position position="163"/>
    </location>
    <ligand>
        <name>a 1,2-diacyl-sn-glycero-3-phospho-(1'-sn-glycerol)</name>
        <dbReference type="ChEBI" id="CHEBI:64716"/>
    </ligand>
</feature>
<proteinExistence type="inferred from homology"/>
<dbReference type="EC" id="2.5.1.145" evidence="1"/>
<dbReference type="EMBL" id="CP001184">
    <property type="protein sequence ID" value="ACI60011.1"/>
    <property type="molecule type" value="Genomic_DNA"/>
</dbReference>
<dbReference type="RefSeq" id="WP_004025579.1">
    <property type="nucleotide sequence ID" value="NC_011374.1"/>
</dbReference>
<dbReference type="SMR" id="B5ZAQ4"/>
<dbReference type="STRING" id="565575.UUR10_0081"/>
<dbReference type="GeneID" id="93848567"/>
<dbReference type="KEGG" id="uue:UUR10_0081"/>
<dbReference type="eggNOG" id="COG0682">
    <property type="taxonomic scope" value="Bacteria"/>
</dbReference>
<dbReference type="HOGENOM" id="CLU_013386_0_2_14"/>
<dbReference type="OrthoDB" id="871140at2"/>
<dbReference type="UniPathway" id="UPA00664"/>
<dbReference type="Proteomes" id="UP000002018">
    <property type="component" value="Chromosome"/>
</dbReference>
<dbReference type="GO" id="GO:0005886">
    <property type="term" value="C:plasma membrane"/>
    <property type="evidence" value="ECO:0007669"/>
    <property type="project" value="UniProtKB-SubCell"/>
</dbReference>
<dbReference type="GO" id="GO:0008961">
    <property type="term" value="F:phosphatidylglycerol-prolipoprotein diacylglyceryl transferase activity"/>
    <property type="evidence" value="ECO:0007669"/>
    <property type="project" value="UniProtKB-UniRule"/>
</dbReference>
<dbReference type="GO" id="GO:0042158">
    <property type="term" value="P:lipoprotein biosynthetic process"/>
    <property type="evidence" value="ECO:0007669"/>
    <property type="project" value="UniProtKB-UniRule"/>
</dbReference>
<dbReference type="HAMAP" id="MF_01147">
    <property type="entry name" value="Lgt"/>
    <property type="match status" value="1"/>
</dbReference>
<dbReference type="InterPro" id="IPR001640">
    <property type="entry name" value="Lgt"/>
</dbReference>
<dbReference type="NCBIfam" id="TIGR00544">
    <property type="entry name" value="lgt"/>
    <property type="match status" value="1"/>
</dbReference>
<dbReference type="PANTHER" id="PTHR30589:SF0">
    <property type="entry name" value="PHOSPHATIDYLGLYCEROL--PROLIPOPROTEIN DIACYLGLYCERYL TRANSFERASE"/>
    <property type="match status" value="1"/>
</dbReference>
<dbReference type="PANTHER" id="PTHR30589">
    <property type="entry name" value="PROLIPOPROTEIN DIACYLGLYCERYL TRANSFERASE"/>
    <property type="match status" value="1"/>
</dbReference>
<dbReference type="Pfam" id="PF01790">
    <property type="entry name" value="LGT"/>
    <property type="match status" value="1"/>
</dbReference>
<dbReference type="PROSITE" id="PS01311">
    <property type="entry name" value="LGT"/>
    <property type="match status" value="1"/>
</dbReference>
<name>LGT_UREU1</name>
<evidence type="ECO:0000255" key="1">
    <source>
        <dbReference type="HAMAP-Rule" id="MF_01147"/>
    </source>
</evidence>
<protein>
    <recommendedName>
        <fullName evidence="1">Phosphatidylglycerol--prolipoprotein diacylglyceryl transferase</fullName>
        <ecNumber evidence="1">2.5.1.145</ecNumber>
    </recommendedName>
</protein>
<gene>
    <name evidence="1" type="primary">lgt</name>
    <name type="ordered locus">UUR10_0081</name>
</gene>
<reference key="1">
    <citation type="submission" date="2008-10" db="EMBL/GenBank/DDBJ databases">
        <title>Genome sequence of Ureaplasma urealyticum serovar 10 ATCC-33699.</title>
        <authorList>
            <person name="Shrivastava S."/>
            <person name="Methe B.A."/>
            <person name="Glass J."/>
            <person name="White K."/>
            <person name="Duffy L.B."/>
        </authorList>
    </citation>
    <scope>NUCLEOTIDE SEQUENCE [LARGE SCALE GENOMIC DNA]</scope>
    <source>
        <strain>ATCC 33699 / Western</strain>
    </source>
</reference>
<organism>
    <name type="scientific">Ureaplasma urealyticum serovar 10 (strain ATCC 33699 / Western)</name>
    <dbReference type="NCBI Taxonomy" id="565575"/>
    <lineage>
        <taxon>Bacteria</taxon>
        <taxon>Bacillati</taxon>
        <taxon>Mycoplasmatota</taxon>
        <taxon>Mycoplasmoidales</taxon>
        <taxon>Mycoplasmoidaceae</taxon>
        <taxon>Ureaplasma</taxon>
    </lineage>
</organism>
<comment type="function">
    <text evidence="1">Catalyzes the transfer of the diacylglyceryl group from phosphatidylglycerol to the sulfhydryl group of the N-terminal cysteine of a prolipoprotein, the first step in the formation of mature lipoproteins.</text>
</comment>
<comment type="catalytic activity">
    <reaction evidence="1">
        <text>L-cysteinyl-[prolipoprotein] + a 1,2-diacyl-sn-glycero-3-phospho-(1'-sn-glycerol) = an S-1,2-diacyl-sn-glyceryl-L-cysteinyl-[prolipoprotein] + sn-glycerol 1-phosphate + H(+)</text>
        <dbReference type="Rhea" id="RHEA:56712"/>
        <dbReference type="Rhea" id="RHEA-COMP:14679"/>
        <dbReference type="Rhea" id="RHEA-COMP:14680"/>
        <dbReference type="ChEBI" id="CHEBI:15378"/>
        <dbReference type="ChEBI" id="CHEBI:29950"/>
        <dbReference type="ChEBI" id="CHEBI:57685"/>
        <dbReference type="ChEBI" id="CHEBI:64716"/>
        <dbReference type="ChEBI" id="CHEBI:140658"/>
        <dbReference type="EC" id="2.5.1.145"/>
    </reaction>
</comment>
<comment type="pathway">
    <text evidence="1">Protein modification; lipoprotein biosynthesis (diacylglyceryl transfer).</text>
</comment>
<comment type="subcellular location">
    <subcellularLocation>
        <location evidence="1">Cell membrane</location>
        <topology evidence="1">Multi-pass membrane protein</topology>
    </subcellularLocation>
</comment>
<comment type="similarity">
    <text evidence="1">Belongs to the Lgt family.</text>
</comment>
<accession>B5ZAQ4</accession>
<keyword id="KW-1003">Cell membrane</keyword>
<keyword id="KW-0472">Membrane</keyword>
<keyword id="KW-0808">Transferase</keyword>
<keyword id="KW-0812">Transmembrane</keyword>
<keyword id="KW-1133">Transmembrane helix</keyword>